<accession>Q0HG64</accession>
<proteinExistence type="inferred from homology"/>
<evidence type="ECO:0000255" key="1">
    <source>
        <dbReference type="HAMAP-Rule" id="MF_01270"/>
    </source>
</evidence>
<gene>
    <name evidence="1" type="primary">anmK</name>
    <name type="ordered locus">Shewmr4_2882</name>
</gene>
<dbReference type="EC" id="2.7.1.170" evidence="1"/>
<dbReference type="EMBL" id="CP000446">
    <property type="protein sequence ID" value="ABI39953.1"/>
    <property type="molecule type" value="Genomic_DNA"/>
</dbReference>
<dbReference type="RefSeq" id="WP_011623632.1">
    <property type="nucleotide sequence ID" value="NC_008321.1"/>
</dbReference>
<dbReference type="SMR" id="Q0HG64"/>
<dbReference type="KEGG" id="she:Shewmr4_2882"/>
<dbReference type="HOGENOM" id="CLU_038782_0_0_6"/>
<dbReference type="UniPathway" id="UPA00343"/>
<dbReference type="UniPathway" id="UPA00544"/>
<dbReference type="GO" id="GO:0005524">
    <property type="term" value="F:ATP binding"/>
    <property type="evidence" value="ECO:0007669"/>
    <property type="project" value="UniProtKB-UniRule"/>
</dbReference>
<dbReference type="GO" id="GO:0016301">
    <property type="term" value="F:kinase activity"/>
    <property type="evidence" value="ECO:0007669"/>
    <property type="project" value="UniProtKB-KW"/>
</dbReference>
<dbReference type="GO" id="GO:0016773">
    <property type="term" value="F:phosphotransferase activity, alcohol group as acceptor"/>
    <property type="evidence" value="ECO:0007669"/>
    <property type="project" value="UniProtKB-UniRule"/>
</dbReference>
<dbReference type="GO" id="GO:0097175">
    <property type="term" value="P:1,6-anhydro-N-acetyl-beta-muramic acid catabolic process"/>
    <property type="evidence" value="ECO:0007669"/>
    <property type="project" value="UniProtKB-UniRule"/>
</dbReference>
<dbReference type="GO" id="GO:0006040">
    <property type="term" value="P:amino sugar metabolic process"/>
    <property type="evidence" value="ECO:0007669"/>
    <property type="project" value="InterPro"/>
</dbReference>
<dbReference type="GO" id="GO:0009254">
    <property type="term" value="P:peptidoglycan turnover"/>
    <property type="evidence" value="ECO:0007669"/>
    <property type="project" value="UniProtKB-UniRule"/>
</dbReference>
<dbReference type="CDD" id="cd24050">
    <property type="entry name" value="ASKHA_NBD_ANMK"/>
    <property type="match status" value="1"/>
</dbReference>
<dbReference type="Gene3D" id="3.30.420.40">
    <property type="match status" value="2"/>
</dbReference>
<dbReference type="HAMAP" id="MF_01270">
    <property type="entry name" value="AnhMurNAc_kinase"/>
    <property type="match status" value="1"/>
</dbReference>
<dbReference type="InterPro" id="IPR005338">
    <property type="entry name" value="Anhydro_N_Ac-Mur_kinase"/>
</dbReference>
<dbReference type="InterPro" id="IPR043129">
    <property type="entry name" value="ATPase_NBD"/>
</dbReference>
<dbReference type="NCBIfam" id="NF007139">
    <property type="entry name" value="PRK09585.1-3"/>
    <property type="match status" value="1"/>
</dbReference>
<dbReference type="NCBIfam" id="NF007148">
    <property type="entry name" value="PRK09585.3-2"/>
    <property type="match status" value="1"/>
</dbReference>
<dbReference type="PANTHER" id="PTHR30605">
    <property type="entry name" value="ANHYDRO-N-ACETYLMURAMIC ACID KINASE"/>
    <property type="match status" value="1"/>
</dbReference>
<dbReference type="PANTHER" id="PTHR30605:SF0">
    <property type="entry name" value="ANHYDRO-N-ACETYLMURAMIC ACID KINASE"/>
    <property type="match status" value="1"/>
</dbReference>
<dbReference type="Pfam" id="PF03702">
    <property type="entry name" value="AnmK"/>
    <property type="match status" value="1"/>
</dbReference>
<dbReference type="SUPFAM" id="SSF53067">
    <property type="entry name" value="Actin-like ATPase domain"/>
    <property type="match status" value="1"/>
</dbReference>
<name>ANMK_SHESM</name>
<keyword id="KW-0067">ATP-binding</keyword>
<keyword id="KW-0119">Carbohydrate metabolism</keyword>
<keyword id="KW-0418">Kinase</keyword>
<keyword id="KW-0547">Nucleotide-binding</keyword>
<keyword id="KW-0808">Transferase</keyword>
<feature type="chain" id="PRO_1000067366" description="Anhydro-N-acetylmuramic acid kinase">
    <location>
        <begin position="1"/>
        <end position="369"/>
    </location>
</feature>
<feature type="binding site" evidence="1">
    <location>
        <begin position="12"/>
        <end position="19"/>
    </location>
    <ligand>
        <name>ATP</name>
        <dbReference type="ChEBI" id="CHEBI:30616"/>
    </ligand>
</feature>
<comment type="function">
    <text evidence="1">Catalyzes the specific phosphorylation of 1,6-anhydro-N-acetylmuramic acid (anhMurNAc) with the simultaneous cleavage of the 1,6-anhydro ring, generating MurNAc-6-P. Is required for the utilization of anhMurNAc either imported from the medium or derived from its own cell wall murein, and thus plays a role in cell wall recycling.</text>
</comment>
<comment type="catalytic activity">
    <reaction evidence="1">
        <text>1,6-anhydro-N-acetyl-beta-muramate + ATP + H2O = N-acetyl-D-muramate 6-phosphate + ADP + H(+)</text>
        <dbReference type="Rhea" id="RHEA:24952"/>
        <dbReference type="ChEBI" id="CHEBI:15377"/>
        <dbReference type="ChEBI" id="CHEBI:15378"/>
        <dbReference type="ChEBI" id="CHEBI:30616"/>
        <dbReference type="ChEBI" id="CHEBI:58690"/>
        <dbReference type="ChEBI" id="CHEBI:58722"/>
        <dbReference type="ChEBI" id="CHEBI:456216"/>
        <dbReference type="EC" id="2.7.1.170"/>
    </reaction>
</comment>
<comment type="pathway">
    <text evidence="1">Amino-sugar metabolism; 1,6-anhydro-N-acetylmuramate degradation.</text>
</comment>
<comment type="pathway">
    <text evidence="1">Cell wall biogenesis; peptidoglycan recycling.</text>
</comment>
<comment type="similarity">
    <text evidence="1">Belongs to the anhydro-N-acetylmuramic acid kinase family.</text>
</comment>
<organism>
    <name type="scientific">Shewanella sp. (strain MR-4)</name>
    <dbReference type="NCBI Taxonomy" id="60480"/>
    <lineage>
        <taxon>Bacteria</taxon>
        <taxon>Pseudomonadati</taxon>
        <taxon>Pseudomonadota</taxon>
        <taxon>Gammaproteobacteria</taxon>
        <taxon>Alteromonadales</taxon>
        <taxon>Shewanellaceae</taxon>
        <taxon>Shewanella</taxon>
    </lineage>
</organism>
<reference key="1">
    <citation type="submission" date="2006-08" db="EMBL/GenBank/DDBJ databases">
        <title>Complete sequence of Shewanella sp. MR-4.</title>
        <authorList>
            <consortium name="US DOE Joint Genome Institute"/>
            <person name="Copeland A."/>
            <person name="Lucas S."/>
            <person name="Lapidus A."/>
            <person name="Barry K."/>
            <person name="Detter J.C."/>
            <person name="Glavina del Rio T."/>
            <person name="Hammon N."/>
            <person name="Israni S."/>
            <person name="Dalin E."/>
            <person name="Tice H."/>
            <person name="Pitluck S."/>
            <person name="Kiss H."/>
            <person name="Brettin T."/>
            <person name="Bruce D."/>
            <person name="Han C."/>
            <person name="Tapia R."/>
            <person name="Gilna P."/>
            <person name="Schmutz J."/>
            <person name="Larimer F."/>
            <person name="Land M."/>
            <person name="Hauser L."/>
            <person name="Kyrpides N."/>
            <person name="Mikhailova N."/>
            <person name="Nealson K."/>
            <person name="Konstantinidis K."/>
            <person name="Klappenbach J."/>
            <person name="Tiedje J."/>
            <person name="Richardson P."/>
        </authorList>
    </citation>
    <scope>NUCLEOTIDE SEQUENCE [LARGE SCALE GENOMIC DNA]</scope>
    <source>
        <strain>MR-4</strain>
    </source>
</reference>
<sequence>MNKAYYIGLMSGTSMDGVDAVLVDFAGEQPQLIATHTEAIPSHLLKGLQRLCLPGNDEINRLGRLDRSVGKLFALAVNNLLAKAQIAKEDIIAIGSHGQTVRHMPNLEVGFTLQIGDPNTIATETGIDVIADFRRKDIALGGQGAPLVPAFHQQTFAQVGKKRVILNIGGIANITYLTGNREEVLGFDTGPGNTLIDAWIQQVKNEPYDKDGEWAASGNTDQQLLAQLLSHPYFSLAYPKSTGRELFNQAWLEQQLSEFNQLDEEDIQSTLLDLTCHSIARDILKLAPVGELFVCGGGAFNTELMQRLAALLPDYHIDTTSALGVDPKWAEGIAFAWLAMRHNLGLPANLPAVTGASREAVLGGRFSAK</sequence>
<protein>
    <recommendedName>
        <fullName evidence="1">Anhydro-N-acetylmuramic acid kinase</fullName>
        <ecNumber evidence="1">2.7.1.170</ecNumber>
    </recommendedName>
    <alternativeName>
        <fullName evidence="1">AnhMurNAc kinase</fullName>
    </alternativeName>
</protein>